<feature type="chain" id="PRO_0000458579" description="Small ribosomal subunit protein uS17m">
    <location>
        <begin position="1"/>
        <end position="165"/>
    </location>
</feature>
<proteinExistence type="evidence at protein level"/>
<gene>
    <name type="primary">mrps17</name>
    <name type="ORF">NCU02419</name>
</gene>
<name>RT17_NEUCR</name>
<organism>
    <name type="scientific">Neurospora crassa (strain ATCC 24698 / 74-OR23-1A / CBS 708.71 / DSM 1257 / FGSC 987)</name>
    <dbReference type="NCBI Taxonomy" id="367110"/>
    <lineage>
        <taxon>Eukaryota</taxon>
        <taxon>Fungi</taxon>
        <taxon>Dikarya</taxon>
        <taxon>Ascomycota</taxon>
        <taxon>Pezizomycotina</taxon>
        <taxon>Sordariomycetes</taxon>
        <taxon>Sordariomycetidae</taxon>
        <taxon>Sordariales</taxon>
        <taxon>Sordariaceae</taxon>
        <taxon>Neurospora</taxon>
    </lineage>
</organism>
<protein>
    <recommendedName>
        <fullName evidence="2">Small ribosomal subunit protein uS17m</fullName>
    </recommendedName>
</protein>
<reference key="1">
    <citation type="journal article" date="2003" name="Nature">
        <title>The genome sequence of the filamentous fungus Neurospora crassa.</title>
        <authorList>
            <person name="Galagan J.E."/>
            <person name="Calvo S.E."/>
            <person name="Borkovich K.A."/>
            <person name="Selker E.U."/>
            <person name="Read N.D."/>
            <person name="Jaffe D.B."/>
            <person name="FitzHugh W."/>
            <person name="Ma L.-J."/>
            <person name="Smirnov S."/>
            <person name="Purcell S."/>
            <person name="Rehman B."/>
            <person name="Elkins T."/>
            <person name="Engels R."/>
            <person name="Wang S."/>
            <person name="Nielsen C.B."/>
            <person name="Butler J."/>
            <person name="Endrizzi M."/>
            <person name="Qui D."/>
            <person name="Ianakiev P."/>
            <person name="Bell-Pedersen D."/>
            <person name="Nelson M.A."/>
            <person name="Werner-Washburne M."/>
            <person name="Selitrennikoff C.P."/>
            <person name="Kinsey J.A."/>
            <person name="Braun E.L."/>
            <person name="Zelter A."/>
            <person name="Schulte U."/>
            <person name="Kothe G.O."/>
            <person name="Jedd G."/>
            <person name="Mewes H.-W."/>
            <person name="Staben C."/>
            <person name="Marcotte E."/>
            <person name="Greenberg D."/>
            <person name="Roy A."/>
            <person name="Foley K."/>
            <person name="Naylor J."/>
            <person name="Stange-Thomann N."/>
            <person name="Barrett R."/>
            <person name="Gnerre S."/>
            <person name="Kamal M."/>
            <person name="Kamvysselis M."/>
            <person name="Mauceli E.W."/>
            <person name="Bielke C."/>
            <person name="Rudd S."/>
            <person name="Frishman D."/>
            <person name="Krystofova S."/>
            <person name="Rasmussen C."/>
            <person name="Metzenberg R.L."/>
            <person name="Perkins D.D."/>
            <person name="Kroken S."/>
            <person name="Cogoni C."/>
            <person name="Macino G."/>
            <person name="Catcheside D.E.A."/>
            <person name="Li W."/>
            <person name="Pratt R.J."/>
            <person name="Osmani S.A."/>
            <person name="DeSouza C.P.C."/>
            <person name="Glass N.L."/>
            <person name="Orbach M.J."/>
            <person name="Berglund J.A."/>
            <person name="Voelker R."/>
            <person name="Yarden O."/>
            <person name="Plamann M."/>
            <person name="Seiler S."/>
            <person name="Dunlap J.C."/>
            <person name="Radford A."/>
            <person name="Aramayo R."/>
            <person name="Natvig D.O."/>
            <person name="Alex L.A."/>
            <person name="Mannhaupt G."/>
            <person name="Ebbole D.J."/>
            <person name="Freitag M."/>
            <person name="Paulsen I."/>
            <person name="Sachs M.S."/>
            <person name="Lander E.S."/>
            <person name="Nusbaum C."/>
            <person name="Birren B.W."/>
        </authorList>
    </citation>
    <scope>NUCLEOTIDE SEQUENCE [LARGE SCALE GENOMIC DNA]</scope>
    <source>
        <strain>ATCC 24698 / 74-OR23-1A / CBS 708.71 / DSM 1257 / FGSC 987</strain>
    </source>
</reference>
<reference evidence="5 6" key="2">
    <citation type="journal article" date="2020" name="Nat. Commun.">
        <title>Analysis of translating mitoribosome reveals functional characteristics of translation in mitochondria of fungi.</title>
        <authorList>
            <person name="Itoh Y."/>
            <person name="Naschberger A."/>
            <person name="Mortezaei N."/>
            <person name="Herrmann J.M."/>
            <person name="Amunts A."/>
        </authorList>
    </citation>
    <scope>STRUCTURE BY ELECTRON MICROSCOPY (2.85 ANGSTROMS)</scope>
</reference>
<keyword id="KW-0002">3D-structure</keyword>
<keyword id="KW-0496">Mitochondrion</keyword>
<keyword id="KW-1185">Reference proteome</keyword>
<keyword id="KW-0687">Ribonucleoprotein</keyword>
<keyword id="KW-0689">Ribosomal protein</keyword>
<accession>Q7S4E0</accession>
<comment type="function">
    <text evidence="4">Component of the mitochondrial ribosome (mitoribosome), a dedicated translation machinery responsible for the synthesis of mitochondrial genome-encoded proteins, including at least some of the essential transmembrane subunits of the mitochondrial respiratory chain. The mitoribosomes are attached to the mitochondrial inner membrane and translation products are cotranslationally integrated into the membrane.</text>
</comment>
<comment type="subunit">
    <text evidence="1">Component of the mitochondrial small ribosomal subunit (mt-SSU). Mature N.crassa 74S mitochondrial ribosomes consist of a small (37S) and a large (54S) subunit. The 37S small subunit contains a 16S ribosomal RNA (16S mt-rRNA) and 32 different proteins. The 54S large subunit contains a 23S rRNA (23S mt-rRNA) and 42 different proteins. uS17m interacts with the F(1)-ATPase inhibitor IF(1) dimer.</text>
</comment>
<comment type="subcellular location">
    <subcellularLocation>
        <location evidence="1">Mitochondrion</location>
    </subcellularLocation>
</comment>
<comment type="similarity">
    <text evidence="3">Belongs to the universal ribosomal protein uS17 family.</text>
</comment>
<dbReference type="EMBL" id="CM002242">
    <property type="protein sequence ID" value="EAA30365.1"/>
    <property type="molecule type" value="Genomic_DNA"/>
</dbReference>
<dbReference type="RefSeq" id="XP_959601.1">
    <property type="nucleotide sequence ID" value="XM_954508.3"/>
</dbReference>
<dbReference type="PDB" id="6YW5">
    <property type="method" value="EM"/>
    <property type="resolution" value="2.85 A"/>
    <property type="chains" value="QQ=1-165"/>
</dbReference>
<dbReference type="PDB" id="6YWX">
    <property type="method" value="EM"/>
    <property type="resolution" value="3.10 A"/>
    <property type="chains" value="QQ=1-165"/>
</dbReference>
<dbReference type="PDBsum" id="6YW5"/>
<dbReference type="PDBsum" id="6YWX"/>
<dbReference type="EMDB" id="EMD-10958"/>
<dbReference type="EMDB" id="EMD-10978"/>
<dbReference type="SMR" id="Q7S4E0"/>
<dbReference type="FunCoup" id="Q7S4E0">
    <property type="interactions" value="174"/>
</dbReference>
<dbReference type="STRING" id="367110.Q7S4E0"/>
<dbReference type="PaxDb" id="5141-EFNCRP00000003238"/>
<dbReference type="EnsemblFungi" id="EAA30365">
    <property type="protein sequence ID" value="EAA30365"/>
    <property type="gene ID" value="NCU02419"/>
</dbReference>
<dbReference type="GeneID" id="3875748"/>
<dbReference type="KEGG" id="ncr:NCU02419"/>
<dbReference type="VEuPathDB" id="FungiDB:NCU02419"/>
<dbReference type="HOGENOM" id="CLU_112095_0_0_1"/>
<dbReference type="InParanoid" id="Q7S4E0"/>
<dbReference type="OMA" id="VHDPNDS"/>
<dbReference type="OrthoDB" id="274752at2759"/>
<dbReference type="Proteomes" id="UP000001805">
    <property type="component" value="Chromosome 7, Linkage Group VII"/>
</dbReference>
<dbReference type="GO" id="GO:0005739">
    <property type="term" value="C:mitochondrion"/>
    <property type="evidence" value="ECO:0000318"/>
    <property type="project" value="GO_Central"/>
</dbReference>
<dbReference type="GO" id="GO:1990904">
    <property type="term" value="C:ribonucleoprotein complex"/>
    <property type="evidence" value="ECO:0007669"/>
    <property type="project" value="UniProtKB-KW"/>
</dbReference>
<dbReference type="GO" id="GO:0005840">
    <property type="term" value="C:ribosome"/>
    <property type="evidence" value="ECO:0007669"/>
    <property type="project" value="UniProtKB-KW"/>
</dbReference>
<dbReference type="GO" id="GO:0003735">
    <property type="term" value="F:structural constituent of ribosome"/>
    <property type="evidence" value="ECO:0000318"/>
    <property type="project" value="GO_Central"/>
</dbReference>
<dbReference type="GO" id="GO:0006412">
    <property type="term" value="P:translation"/>
    <property type="evidence" value="ECO:0007669"/>
    <property type="project" value="InterPro"/>
</dbReference>
<dbReference type="FunFam" id="2.40.50.140:FF:000648">
    <property type="entry name" value="Mitochondrial 37S ribosomal protein S17"/>
    <property type="match status" value="1"/>
</dbReference>
<dbReference type="Gene3D" id="2.40.50.140">
    <property type="entry name" value="Nucleic acid-binding proteins"/>
    <property type="match status" value="1"/>
</dbReference>
<dbReference type="InterPro" id="IPR012340">
    <property type="entry name" value="NA-bd_OB-fold"/>
</dbReference>
<dbReference type="InterPro" id="IPR000266">
    <property type="entry name" value="Ribosomal_uS17"/>
</dbReference>
<dbReference type="PANTHER" id="PTHR10744">
    <property type="entry name" value="40S RIBOSOMAL PROTEIN S11 FAMILY MEMBER"/>
    <property type="match status" value="1"/>
</dbReference>
<dbReference type="PANTHER" id="PTHR10744:SF1">
    <property type="entry name" value="SMALL RIBOSOMAL SUBUNIT PROTEIN US17M"/>
    <property type="match status" value="1"/>
</dbReference>
<dbReference type="Pfam" id="PF00366">
    <property type="entry name" value="Ribosomal_S17"/>
    <property type="match status" value="1"/>
</dbReference>
<dbReference type="SUPFAM" id="SSF50249">
    <property type="entry name" value="Nucleic acid-binding proteins"/>
    <property type="match status" value="1"/>
</dbReference>
<sequence length="165" mass="18469">MASTIAAATKVSRKMFRELHGVVVTSGLIDKTVKVRVGGQKFNKFLQKHFDDPKQYLVHDPNNSLRAGDVVAIMPGFITSKSKRHVVKHIIAPAGTPIEERPPIPSLDELWDAKDAAKAAKKERKVLREKMQAAEEAIELAERMARHAVREIAMREKIISLQKVD</sequence>
<evidence type="ECO:0000269" key="1">
    <source>
    </source>
</evidence>
<evidence type="ECO:0000303" key="2">
    <source>
    </source>
</evidence>
<evidence type="ECO:0000305" key="3"/>
<evidence type="ECO:0000305" key="4">
    <source>
    </source>
</evidence>
<evidence type="ECO:0007744" key="5">
    <source>
        <dbReference type="PDB" id="6YW5"/>
    </source>
</evidence>
<evidence type="ECO:0007744" key="6">
    <source>
        <dbReference type="PDB" id="6YWX"/>
    </source>
</evidence>